<protein>
    <recommendedName>
        <fullName evidence="1">Small ribosomal subunit protein uS4</fullName>
    </recommendedName>
    <alternativeName>
        <fullName evidence="2">30S ribosomal protein S4</fullName>
    </alternativeName>
</protein>
<evidence type="ECO:0000255" key="1">
    <source>
        <dbReference type="HAMAP-Rule" id="MF_01306"/>
    </source>
</evidence>
<evidence type="ECO:0000305" key="2"/>
<gene>
    <name evidence="1" type="primary">rpsD</name>
    <name type="ordered locus">Francci3_0609</name>
</gene>
<name>RS4_FRACC</name>
<keyword id="KW-1185">Reference proteome</keyword>
<keyword id="KW-0687">Ribonucleoprotein</keyword>
<keyword id="KW-0689">Ribosomal protein</keyword>
<keyword id="KW-0694">RNA-binding</keyword>
<keyword id="KW-0699">rRNA-binding</keyword>
<feature type="chain" id="PRO_0000293286" description="Small ribosomal subunit protein uS4">
    <location>
        <begin position="1"/>
        <end position="209"/>
    </location>
</feature>
<feature type="domain" description="S4 RNA-binding" evidence="1">
    <location>
        <begin position="98"/>
        <end position="164"/>
    </location>
</feature>
<reference key="1">
    <citation type="journal article" date="2007" name="Genome Res.">
        <title>Genome characteristics of facultatively symbiotic Frankia sp. strains reflect host range and host plant biogeography.</title>
        <authorList>
            <person name="Normand P."/>
            <person name="Lapierre P."/>
            <person name="Tisa L.S."/>
            <person name="Gogarten J.P."/>
            <person name="Alloisio N."/>
            <person name="Bagnarol E."/>
            <person name="Bassi C.A."/>
            <person name="Berry A.M."/>
            <person name="Bickhart D.M."/>
            <person name="Choisne N."/>
            <person name="Couloux A."/>
            <person name="Cournoyer B."/>
            <person name="Cruveiller S."/>
            <person name="Daubin V."/>
            <person name="Demange N."/>
            <person name="Francino M.P."/>
            <person name="Goltsman E."/>
            <person name="Huang Y."/>
            <person name="Kopp O.R."/>
            <person name="Labarre L."/>
            <person name="Lapidus A."/>
            <person name="Lavire C."/>
            <person name="Marechal J."/>
            <person name="Martinez M."/>
            <person name="Mastronunzio J.E."/>
            <person name="Mullin B.C."/>
            <person name="Niemann J."/>
            <person name="Pujic P."/>
            <person name="Rawnsley T."/>
            <person name="Rouy Z."/>
            <person name="Schenowitz C."/>
            <person name="Sellstedt A."/>
            <person name="Tavares F."/>
            <person name="Tomkins J.P."/>
            <person name="Vallenet D."/>
            <person name="Valverde C."/>
            <person name="Wall L.G."/>
            <person name="Wang Y."/>
            <person name="Medigue C."/>
            <person name="Benson D.R."/>
        </authorList>
    </citation>
    <scope>NUCLEOTIDE SEQUENCE [LARGE SCALE GENOMIC DNA]</scope>
    <source>
        <strain>DSM 45818 / CECT 9043 / HFP020203 / CcI3</strain>
    </source>
</reference>
<organism>
    <name type="scientific">Frankia casuarinae (strain DSM 45818 / CECT 9043 / HFP020203 / CcI3)</name>
    <dbReference type="NCBI Taxonomy" id="106370"/>
    <lineage>
        <taxon>Bacteria</taxon>
        <taxon>Bacillati</taxon>
        <taxon>Actinomycetota</taxon>
        <taxon>Actinomycetes</taxon>
        <taxon>Frankiales</taxon>
        <taxon>Frankiaceae</taxon>
        <taxon>Frankia</taxon>
    </lineage>
</organism>
<sequence>MARYTGADCKRCRREKTKLFLKGSKCDTPKCPIEIRPYPPGEHGRGRTKDSEYLLQKREKQKCARIYGVLEKQFRGYYDEANRRAGKTGDELLKILESRLDNVVYRGGFAPSRDAARQAVRHGHVQVNGRKVDIPSYRISENDIVEIAPKARELTPFIVARETAGQGRAVPAWLEVIPSQLRILVHSLPARQVIDTQVQEQLIVELYSK</sequence>
<comment type="function">
    <text evidence="1">One of the primary rRNA binding proteins, it binds directly to 16S rRNA where it nucleates assembly of the body of the 30S subunit.</text>
</comment>
<comment type="function">
    <text evidence="1">With S5 and S12 plays an important role in translational accuracy.</text>
</comment>
<comment type="subunit">
    <text evidence="1">Part of the 30S ribosomal subunit. Contacts protein S5. The interaction surface between S4 and S5 is involved in control of translational fidelity.</text>
</comment>
<comment type="similarity">
    <text evidence="1">Belongs to the universal ribosomal protein uS4 family.</text>
</comment>
<proteinExistence type="inferred from homology"/>
<dbReference type="EMBL" id="CP000249">
    <property type="protein sequence ID" value="ABD09993.1"/>
    <property type="molecule type" value="Genomic_DNA"/>
</dbReference>
<dbReference type="RefSeq" id="WP_011435062.1">
    <property type="nucleotide sequence ID" value="NZ_JENI01000019.1"/>
</dbReference>
<dbReference type="SMR" id="Q2JFE9"/>
<dbReference type="STRING" id="106370.Francci3_0609"/>
<dbReference type="KEGG" id="fra:Francci3_0609"/>
<dbReference type="eggNOG" id="COG0522">
    <property type="taxonomic scope" value="Bacteria"/>
</dbReference>
<dbReference type="HOGENOM" id="CLU_092403_0_2_11"/>
<dbReference type="OrthoDB" id="9803672at2"/>
<dbReference type="PhylomeDB" id="Q2JFE9"/>
<dbReference type="Proteomes" id="UP000001937">
    <property type="component" value="Chromosome"/>
</dbReference>
<dbReference type="GO" id="GO:0015935">
    <property type="term" value="C:small ribosomal subunit"/>
    <property type="evidence" value="ECO:0007669"/>
    <property type="project" value="InterPro"/>
</dbReference>
<dbReference type="GO" id="GO:0019843">
    <property type="term" value="F:rRNA binding"/>
    <property type="evidence" value="ECO:0007669"/>
    <property type="project" value="UniProtKB-UniRule"/>
</dbReference>
<dbReference type="GO" id="GO:0003735">
    <property type="term" value="F:structural constituent of ribosome"/>
    <property type="evidence" value="ECO:0007669"/>
    <property type="project" value="InterPro"/>
</dbReference>
<dbReference type="GO" id="GO:0042274">
    <property type="term" value="P:ribosomal small subunit biogenesis"/>
    <property type="evidence" value="ECO:0007669"/>
    <property type="project" value="TreeGrafter"/>
</dbReference>
<dbReference type="GO" id="GO:0006412">
    <property type="term" value="P:translation"/>
    <property type="evidence" value="ECO:0007669"/>
    <property type="project" value="UniProtKB-UniRule"/>
</dbReference>
<dbReference type="CDD" id="cd00165">
    <property type="entry name" value="S4"/>
    <property type="match status" value="1"/>
</dbReference>
<dbReference type="FunFam" id="3.10.290.10:FF:000001">
    <property type="entry name" value="30S ribosomal protein S4"/>
    <property type="match status" value="1"/>
</dbReference>
<dbReference type="Gene3D" id="1.10.1050.10">
    <property type="entry name" value="Ribosomal Protein S4 Delta 41, Chain A, domain 1"/>
    <property type="match status" value="1"/>
</dbReference>
<dbReference type="Gene3D" id="3.10.290.10">
    <property type="entry name" value="RNA-binding S4 domain"/>
    <property type="match status" value="1"/>
</dbReference>
<dbReference type="HAMAP" id="MF_01306_B">
    <property type="entry name" value="Ribosomal_uS4_B"/>
    <property type="match status" value="1"/>
</dbReference>
<dbReference type="InterPro" id="IPR022801">
    <property type="entry name" value="Ribosomal_uS4"/>
</dbReference>
<dbReference type="InterPro" id="IPR005709">
    <property type="entry name" value="Ribosomal_uS4_bac-type"/>
</dbReference>
<dbReference type="InterPro" id="IPR001912">
    <property type="entry name" value="Ribosomal_uS4_N"/>
</dbReference>
<dbReference type="InterPro" id="IPR002942">
    <property type="entry name" value="S4_RNA-bd"/>
</dbReference>
<dbReference type="InterPro" id="IPR036986">
    <property type="entry name" value="S4_RNA-bd_sf"/>
</dbReference>
<dbReference type="NCBIfam" id="NF003717">
    <property type="entry name" value="PRK05327.1"/>
    <property type="match status" value="1"/>
</dbReference>
<dbReference type="NCBIfam" id="TIGR01017">
    <property type="entry name" value="rpsD_bact"/>
    <property type="match status" value="1"/>
</dbReference>
<dbReference type="PANTHER" id="PTHR11831">
    <property type="entry name" value="30S 40S RIBOSOMAL PROTEIN"/>
    <property type="match status" value="1"/>
</dbReference>
<dbReference type="PANTHER" id="PTHR11831:SF4">
    <property type="entry name" value="SMALL RIBOSOMAL SUBUNIT PROTEIN US4M"/>
    <property type="match status" value="1"/>
</dbReference>
<dbReference type="Pfam" id="PF00163">
    <property type="entry name" value="Ribosomal_S4"/>
    <property type="match status" value="1"/>
</dbReference>
<dbReference type="Pfam" id="PF01479">
    <property type="entry name" value="S4"/>
    <property type="match status" value="1"/>
</dbReference>
<dbReference type="SMART" id="SM01390">
    <property type="entry name" value="Ribosomal_S4"/>
    <property type="match status" value="1"/>
</dbReference>
<dbReference type="SMART" id="SM00363">
    <property type="entry name" value="S4"/>
    <property type="match status" value="1"/>
</dbReference>
<dbReference type="SUPFAM" id="SSF55174">
    <property type="entry name" value="Alpha-L RNA-binding motif"/>
    <property type="match status" value="1"/>
</dbReference>
<dbReference type="PROSITE" id="PS50889">
    <property type="entry name" value="S4"/>
    <property type="match status" value="1"/>
</dbReference>
<accession>Q2JFE9</accession>